<sequence length="430" mass="46297">MGQSVVVLGAQWGDEGKGKIVDLLTEEIGAVVRFQGGHNAGHTLVINGKKTVLHLIPSGILRDDALCLIGNGVVISPAALQKEIAELETSGVEVRSRLKISPAAPLIMPYHIALDQARERAAGGKAIGTTGRGIGPAYEDKVARRGIRIADLHYPKQLEELLRTALDYHNFVLTNYLKTDAVDFQKTFDEALAFGEYVQPMKSDVAGILHDLRKQGKRVLFEGAQGALLDIDHGTYPYVTSSNTTVGGALAGAGVGADSIDYVLGIAKAYATRVGGGPFPTELDDEIGQGIRDRGAEYGASTGRPRRCGWMDIVALKRAVAINGISGLCITKLDVLDGMEKLKVCIAYEYNGKRTEYAPLDAQGWEECTPVYLEFPGWTENTHGITNWDDLPPAARAYLRSLEELAGCPISIVSTGPDRDHTMVLQDPFA</sequence>
<evidence type="ECO:0000255" key="1">
    <source>
        <dbReference type="HAMAP-Rule" id="MF_00011"/>
    </source>
</evidence>
<reference key="1">
    <citation type="submission" date="2008-06" db="EMBL/GenBank/DDBJ databases">
        <title>Complete sequence of Stenotrophomonas maltophilia R551-3.</title>
        <authorList>
            <consortium name="US DOE Joint Genome Institute"/>
            <person name="Lucas S."/>
            <person name="Copeland A."/>
            <person name="Lapidus A."/>
            <person name="Glavina del Rio T."/>
            <person name="Dalin E."/>
            <person name="Tice H."/>
            <person name="Pitluck S."/>
            <person name="Chain P."/>
            <person name="Malfatti S."/>
            <person name="Shin M."/>
            <person name="Vergez L."/>
            <person name="Lang D."/>
            <person name="Schmutz J."/>
            <person name="Larimer F."/>
            <person name="Land M."/>
            <person name="Hauser L."/>
            <person name="Kyrpides N."/>
            <person name="Mikhailova N."/>
            <person name="Taghavi S."/>
            <person name="Monchy S."/>
            <person name="Newman L."/>
            <person name="Vangronsveld J."/>
            <person name="van der Lelie D."/>
            <person name="Richardson P."/>
        </authorList>
    </citation>
    <scope>NUCLEOTIDE SEQUENCE [LARGE SCALE GENOMIC DNA]</scope>
    <source>
        <strain>R551-3</strain>
    </source>
</reference>
<feature type="chain" id="PRO_1000089343" description="Adenylosuccinate synthetase">
    <location>
        <begin position="1"/>
        <end position="430"/>
    </location>
</feature>
<feature type="active site" description="Proton acceptor" evidence="1">
    <location>
        <position position="14"/>
    </location>
</feature>
<feature type="active site" description="Proton donor" evidence="1">
    <location>
        <position position="42"/>
    </location>
</feature>
<feature type="binding site" evidence="1">
    <location>
        <begin position="13"/>
        <end position="19"/>
    </location>
    <ligand>
        <name>GTP</name>
        <dbReference type="ChEBI" id="CHEBI:37565"/>
    </ligand>
</feature>
<feature type="binding site" description="in other chain" evidence="1">
    <location>
        <begin position="14"/>
        <end position="17"/>
    </location>
    <ligand>
        <name>IMP</name>
        <dbReference type="ChEBI" id="CHEBI:58053"/>
        <note>ligand shared between dimeric partners</note>
    </ligand>
</feature>
<feature type="binding site" evidence="1">
    <location>
        <position position="14"/>
    </location>
    <ligand>
        <name>Mg(2+)</name>
        <dbReference type="ChEBI" id="CHEBI:18420"/>
    </ligand>
</feature>
<feature type="binding site" description="in other chain" evidence="1">
    <location>
        <begin position="39"/>
        <end position="42"/>
    </location>
    <ligand>
        <name>IMP</name>
        <dbReference type="ChEBI" id="CHEBI:58053"/>
        <note>ligand shared between dimeric partners</note>
    </ligand>
</feature>
<feature type="binding site" evidence="1">
    <location>
        <begin position="41"/>
        <end position="43"/>
    </location>
    <ligand>
        <name>GTP</name>
        <dbReference type="ChEBI" id="CHEBI:37565"/>
    </ligand>
</feature>
<feature type="binding site" evidence="1">
    <location>
        <position position="41"/>
    </location>
    <ligand>
        <name>Mg(2+)</name>
        <dbReference type="ChEBI" id="CHEBI:18420"/>
    </ligand>
</feature>
<feature type="binding site" description="in other chain" evidence="1">
    <location>
        <position position="130"/>
    </location>
    <ligand>
        <name>IMP</name>
        <dbReference type="ChEBI" id="CHEBI:58053"/>
        <note>ligand shared between dimeric partners</note>
    </ligand>
</feature>
<feature type="binding site" evidence="1">
    <location>
        <position position="144"/>
    </location>
    <ligand>
        <name>IMP</name>
        <dbReference type="ChEBI" id="CHEBI:58053"/>
        <note>ligand shared between dimeric partners</note>
    </ligand>
</feature>
<feature type="binding site" description="in other chain" evidence="1">
    <location>
        <position position="225"/>
    </location>
    <ligand>
        <name>IMP</name>
        <dbReference type="ChEBI" id="CHEBI:58053"/>
        <note>ligand shared between dimeric partners</note>
    </ligand>
</feature>
<feature type="binding site" description="in other chain" evidence="1">
    <location>
        <position position="240"/>
    </location>
    <ligand>
        <name>IMP</name>
        <dbReference type="ChEBI" id="CHEBI:58053"/>
        <note>ligand shared between dimeric partners</note>
    </ligand>
</feature>
<feature type="binding site" evidence="1">
    <location>
        <begin position="300"/>
        <end position="306"/>
    </location>
    <ligand>
        <name>substrate</name>
    </ligand>
</feature>
<feature type="binding site" description="in other chain" evidence="1">
    <location>
        <position position="304"/>
    </location>
    <ligand>
        <name>IMP</name>
        <dbReference type="ChEBI" id="CHEBI:58053"/>
        <note>ligand shared between dimeric partners</note>
    </ligand>
</feature>
<feature type="binding site" evidence="1">
    <location>
        <position position="306"/>
    </location>
    <ligand>
        <name>GTP</name>
        <dbReference type="ChEBI" id="CHEBI:37565"/>
    </ligand>
</feature>
<feature type="binding site" evidence="1">
    <location>
        <begin position="332"/>
        <end position="334"/>
    </location>
    <ligand>
        <name>GTP</name>
        <dbReference type="ChEBI" id="CHEBI:37565"/>
    </ligand>
</feature>
<feature type="binding site" evidence="1">
    <location>
        <begin position="414"/>
        <end position="416"/>
    </location>
    <ligand>
        <name>GTP</name>
        <dbReference type="ChEBI" id="CHEBI:37565"/>
    </ligand>
</feature>
<comment type="function">
    <text evidence="1">Plays an important role in the de novo pathway of purine nucleotide biosynthesis. Catalyzes the first committed step in the biosynthesis of AMP from IMP.</text>
</comment>
<comment type="catalytic activity">
    <reaction evidence="1">
        <text>IMP + L-aspartate + GTP = N(6)-(1,2-dicarboxyethyl)-AMP + GDP + phosphate + 2 H(+)</text>
        <dbReference type="Rhea" id="RHEA:15753"/>
        <dbReference type="ChEBI" id="CHEBI:15378"/>
        <dbReference type="ChEBI" id="CHEBI:29991"/>
        <dbReference type="ChEBI" id="CHEBI:37565"/>
        <dbReference type="ChEBI" id="CHEBI:43474"/>
        <dbReference type="ChEBI" id="CHEBI:57567"/>
        <dbReference type="ChEBI" id="CHEBI:58053"/>
        <dbReference type="ChEBI" id="CHEBI:58189"/>
        <dbReference type="EC" id="6.3.4.4"/>
    </reaction>
</comment>
<comment type="cofactor">
    <cofactor evidence="1">
        <name>Mg(2+)</name>
        <dbReference type="ChEBI" id="CHEBI:18420"/>
    </cofactor>
    <text evidence="1">Binds 1 Mg(2+) ion per subunit.</text>
</comment>
<comment type="pathway">
    <text evidence="1">Purine metabolism; AMP biosynthesis via de novo pathway; AMP from IMP: step 1/2.</text>
</comment>
<comment type="subunit">
    <text evidence="1">Homodimer.</text>
</comment>
<comment type="subcellular location">
    <subcellularLocation>
        <location evidence="1">Cytoplasm</location>
    </subcellularLocation>
</comment>
<comment type="similarity">
    <text evidence="1">Belongs to the adenylosuccinate synthetase family.</text>
</comment>
<protein>
    <recommendedName>
        <fullName evidence="1">Adenylosuccinate synthetase</fullName>
        <shortName evidence="1">AMPSase</shortName>
        <shortName evidence="1">AdSS</shortName>
        <ecNumber evidence="1">6.3.4.4</ecNumber>
    </recommendedName>
    <alternativeName>
        <fullName evidence="1">IMP--aspartate ligase</fullName>
    </alternativeName>
</protein>
<proteinExistence type="inferred from homology"/>
<dbReference type="EC" id="6.3.4.4" evidence="1"/>
<dbReference type="EMBL" id="CP001111">
    <property type="protein sequence ID" value="ACF52712.1"/>
    <property type="molecule type" value="Genomic_DNA"/>
</dbReference>
<dbReference type="RefSeq" id="WP_006383668.1">
    <property type="nucleotide sequence ID" value="NC_011071.1"/>
</dbReference>
<dbReference type="SMR" id="B4SS80"/>
<dbReference type="STRING" id="391008.Smal_3013"/>
<dbReference type="KEGG" id="smt:Smal_3013"/>
<dbReference type="eggNOG" id="COG0104">
    <property type="taxonomic scope" value="Bacteria"/>
</dbReference>
<dbReference type="HOGENOM" id="CLU_029848_0_0_6"/>
<dbReference type="OrthoDB" id="9807553at2"/>
<dbReference type="UniPathway" id="UPA00075">
    <property type="reaction ID" value="UER00335"/>
</dbReference>
<dbReference type="Proteomes" id="UP000001867">
    <property type="component" value="Chromosome"/>
</dbReference>
<dbReference type="GO" id="GO:0005737">
    <property type="term" value="C:cytoplasm"/>
    <property type="evidence" value="ECO:0007669"/>
    <property type="project" value="UniProtKB-SubCell"/>
</dbReference>
<dbReference type="GO" id="GO:0004019">
    <property type="term" value="F:adenylosuccinate synthase activity"/>
    <property type="evidence" value="ECO:0007669"/>
    <property type="project" value="UniProtKB-UniRule"/>
</dbReference>
<dbReference type="GO" id="GO:0005525">
    <property type="term" value="F:GTP binding"/>
    <property type="evidence" value="ECO:0007669"/>
    <property type="project" value="UniProtKB-UniRule"/>
</dbReference>
<dbReference type="GO" id="GO:0000287">
    <property type="term" value="F:magnesium ion binding"/>
    <property type="evidence" value="ECO:0007669"/>
    <property type="project" value="UniProtKB-UniRule"/>
</dbReference>
<dbReference type="GO" id="GO:0044208">
    <property type="term" value="P:'de novo' AMP biosynthetic process"/>
    <property type="evidence" value="ECO:0007669"/>
    <property type="project" value="UniProtKB-UniRule"/>
</dbReference>
<dbReference type="GO" id="GO:0046040">
    <property type="term" value="P:IMP metabolic process"/>
    <property type="evidence" value="ECO:0007669"/>
    <property type="project" value="TreeGrafter"/>
</dbReference>
<dbReference type="CDD" id="cd03108">
    <property type="entry name" value="AdSS"/>
    <property type="match status" value="1"/>
</dbReference>
<dbReference type="FunFam" id="1.10.300.10:FF:000001">
    <property type="entry name" value="Adenylosuccinate synthetase"/>
    <property type="match status" value="1"/>
</dbReference>
<dbReference type="FunFam" id="3.90.170.10:FF:000001">
    <property type="entry name" value="Adenylosuccinate synthetase"/>
    <property type="match status" value="1"/>
</dbReference>
<dbReference type="Gene3D" id="3.40.440.10">
    <property type="entry name" value="Adenylosuccinate Synthetase, subunit A, domain 1"/>
    <property type="match status" value="1"/>
</dbReference>
<dbReference type="Gene3D" id="1.10.300.10">
    <property type="entry name" value="Adenylosuccinate Synthetase, subunit A, domain 2"/>
    <property type="match status" value="1"/>
</dbReference>
<dbReference type="Gene3D" id="3.90.170.10">
    <property type="entry name" value="Adenylosuccinate Synthetase, subunit A, domain 3"/>
    <property type="match status" value="1"/>
</dbReference>
<dbReference type="HAMAP" id="MF_00011">
    <property type="entry name" value="Adenylosucc_synth"/>
    <property type="match status" value="1"/>
</dbReference>
<dbReference type="InterPro" id="IPR018220">
    <property type="entry name" value="Adenylosuccin_syn_GTP-bd"/>
</dbReference>
<dbReference type="InterPro" id="IPR033128">
    <property type="entry name" value="Adenylosuccin_syn_Lys_AS"/>
</dbReference>
<dbReference type="InterPro" id="IPR042109">
    <property type="entry name" value="Adenylosuccinate_synth_dom1"/>
</dbReference>
<dbReference type="InterPro" id="IPR042110">
    <property type="entry name" value="Adenylosuccinate_synth_dom2"/>
</dbReference>
<dbReference type="InterPro" id="IPR042111">
    <property type="entry name" value="Adenylosuccinate_synth_dom3"/>
</dbReference>
<dbReference type="InterPro" id="IPR001114">
    <property type="entry name" value="Adenylosuccinate_synthetase"/>
</dbReference>
<dbReference type="InterPro" id="IPR027417">
    <property type="entry name" value="P-loop_NTPase"/>
</dbReference>
<dbReference type="NCBIfam" id="NF002223">
    <property type="entry name" value="PRK01117.1"/>
    <property type="match status" value="1"/>
</dbReference>
<dbReference type="NCBIfam" id="TIGR00184">
    <property type="entry name" value="purA"/>
    <property type="match status" value="1"/>
</dbReference>
<dbReference type="PANTHER" id="PTHR11846">
    <property type="entry name" value="ADENYLOSUCCINATE SYNTHETASE"/>
    <property type="match status" value="1"/>
</dbReference>
<dbReference type="PANTHER" id="PTHR11846:SF0">
    <property type="entry name" value="ADENYLOSUCCINATE SYNTHETASE"/>
    <property type="match status" value="1"/>
</dbReference>
<dbReference type="Pfam" id="PF00709">
    <property type="entry name" value="Adenylsucc_synt"/>
    <property type="match status" value="1"/>
</dbReference>
<dbReference type="SMART" id="SM00788">
    <property type="entry name" value="Adenylsucc_synt"/>
    <property type="match status" value="1"/>
</dbReference>
<dbReference type="SUPFAM" id="SSF52540">
    <property type="entry name" value="P-loop containing nucleoside triphosphate hydrolases"/>
    <property type="match status" value="1"/>
</dbReference>
<dbReference type="PROSITE" id="PS01266">
    <property type="entry name" value="ADENYLOSUCCIN_SYN_1"/>
    <property type="match status" value="1"/>
</dbReference>
<dbReference type="PROSITE" id="PS00513">
    <property type="entry name" value="ADENYLOSUCCIN_SYN_2"/>
    <property type="match status" value="1"/>
</dbReference>
<gene>
    <name evidence="1" type="primary">purA</name>
    <name type="ordered locus">Smal_3013</name>
</gene>
<keyword id="KW-0963">Cytoplasm</keyword>
<keyword id="KW-0342">GTP-binding</keyword>
<keyword id="KW-0436">Ligase</keyword>
<keyword id="KW-0460">Magnesium</keyword>
<keyword id="KW-0479">Metal-binding</keyword>
<keyword id="KW-0547">Nucleotide-binding</keyword>
<keyword id="KW-0658">Purine biosynthesis</keyword>
<accession>B4SS80</accession>
<organism>
    <name type="scientific">Stenotrophomonas maltophilia (strain R551-3)</name>
    <dbReference type="NCBI Taxonomy" id="391008"/>
    <lineage>
        <taxon>Bacteria</taxon>
        <taxon>Pseudomonadati</taxon>
        <taxon>Pseudomonadota</taxon>
        <taxon>Gammaproteobacteria</taxon>
        <taxon>Lysobacterales</taxon>
        <taxon>Lysobacteraceae</taxon>
        <taxon>Stenotrophomonas</taxon>
        <taxon>Stenotrophomonas maltophilia group</taxon>
    </lineage>
</organism>
<name>PURA_STRM5</name>